<protein>
    <recommendedName>
        <fullName evidence="1">DNA ligase</fullName>
        <ecNumber evidence="1">6.5.1.2</ecNumber>
    </recommendedName>
    <alternativeName>
        <fullName evidence="1">Polydeoxyribonucleotide synthase [NAD(+)]</fullName>
    </alternativeName>
</protein>
<organism>
    <name type="scientific">Yersinia pestis</name>
    <dbReference type="NCBI Taxonomy" id="632"/>
    <lineage>
        <taxon>Bacteria</taxon>
        <taxon>Pseudomonadati</taxon>
        <taxon>Pseudomonadota</taxon>
        <taxon>Gammaproteobacteria</taxon>
        <taxon>Enterobacterales</taxon>
        <taxon>Yersiniaceae</taxon>
        <taxon>Yersinia</taxon>
    </lineage>
</organism>
<proteinExistence type="inferred from homology"/>
<sequence length="670" mass="73898">MESIIQQINQLRTSLRHHEHQYHVLDAPEIPDAEYDRMMQQLRDLEAQHPELVTNDSPTQRVGAAPLDAFEQVKHEVPMLSLDNVFDEESYLAFDKRVHDRLKTAEPLTFCCELKLDGLAVSLLYENGELVRAATRGDGTTGENITANVRTIRAIPLRLHGDNVPRRVEVRGEVFMPQAGFEQLNEEARRKGGKVFANPRNAAAGSLRQLDPRITAKRPLTFFCYGVGLLDGGELPRSHIQCLMQFKAWGLPVSERVKLCTGSDQVIAFYRQIEQDRAGLGFDIDGVVIKVDDLALQEQLGFVARAPRWATAFKFPAQEQITQVREVEFQVGRTGAITPVARLEPVQVAGVIVSNATLHNADEIERLGLRIGDTVIVRRAGDVIPQVVGVVMEQRPDDTKEITFPSQCPVCGSDIERVEGEAVARCTGGLFCAAQRKEALKHFVSRRALDVDGMGDKIIEQLVEKQYVENPADLFQLTAGKLTGLDRMGPKSAQNLIAALEKAKQTTFARFLYALGIREVGEATAANLAAHFRTLDNLRAADIETLKSVPDVGEVVAKHVMNFLSEEHNQKVIEELEKVVSWPEPQQIVVEESDSPFAGKTVVLTGSLTILSRDEAKDRLTALGAKVSGSVSKKTHLVIAGEAAGSKLAKAQELGIKVIDEAEMIRLLGE</sequence>
<reference key="1">
    <citation type="journal article" date="2002" name="J. Bacteriol.">
        <title>Genome sequence of Yersinia pestis KIM.</title>
        <authorList>
            <person name="Deng W."/>
            <person name="Burland V."/>
            <person name="Plunkett G. III"/>
            <person name="Boutin A."/>
            <person name="Mayhew G.F."/>
            <person name="Liss P."/>
            <person name="Perna N.T."/>
            <person name="Rose D.J."/>
            <person name="Mau B."/>
            <person name="Zhou S."/>
            <person name="Schwartz D.C."/>
            <person name="Fetherston J.D."/>
            <person name="Lindler L.E."/>
            <person name="Brubaker R.R."/>
            <person name="Plano G.V."/>
            <person name="Straley S.C."/>
            <person name="McDonough K.A."/>
            <person name="Nilles M.L."/>
            <person name="Matson J.S."/>
            <person name="Blattner F.R."/>
            <person name="Perry R.D."/>
        </authorList>
    </citation>
    <scope>NUCLEOTIDE SEQUENCE [LARGE SCALE GENOMIC DNA]</scope>
    <source>
        <strain>KIM10+ / Biovar Mediaevalis</strain>
    </source>
</reference>
<reference key="2">
    <citation type="journal article" date="2001" name="Nature">
        <title>Genome sequence of Yersinia pestis, the causative agent of plague.</title>
        <authorList>
            <person name="Parkhill J."/>
            <person name="Wren B.W."/>
            <person name="Thomson N.R."/>
            <person name="Titball R.W."/>
            <person name="Holden M.T.G."/>
            <person name="Prentice M.B."/>
            <person name="Sebaihia M."/>
            <person name="James K.D."/>
            <person name="Churcher C.M."/>
            <person name="Mungall K.L."/>
            <person name="Baker S."/>
            <person name="Basham D."/>
            <person name="Bentley S.D."/>
            <person name="Brooks K."/>
            <person name="Cerdeno-Tarraga A.-M."/>
            <person name="Chillingworth T."/>
            <person name="Cronin A."/>
            <person name="Davies R.M."/>
            <person name="Davis P."/>
            <person name="Dougan G."/>
            <person name="Feltwell T."/>
            <person name="Hamlin N."/>
            <person name="Holroyd S."/>
            <person name="Jagels K."/>
            <person name="Karlyshev A.V."/>
            <person name="Leather S."/>
            <person name="Moule S."/>
            <person name="Oyston P.C.F."/>
            <person name="Quail M.A."/>
            <person name="Rutherford K.M."/>
            <person name="Simmonds M."/>
            <person name="Skelton J."/>
            <person name="Stevens K."/>
            <person name="Whitehead S."/>
            <person name="Barrell B.G."/>
        </authorList>
    </citation>
    <scope>NUCLEOTIDE SEQUENCE [LARGE SCALE GENOMIC DNA]</scope>
    <source>
        <strain>CO-92 / Biovar Orientalis</strain>
    </source>
</reference>
<reference key="3">
    <citation type="journal article" date="2004" name="DNA Res.">
        <title>Complete genome sequence of Yersinia pestis strain 91001, an isolate avirulent to humans.</title>
        <authorList>
            <person name="Song Y."/>
            <person name="Tong Z."/>
            <person name="Wang J."/>
            <person name="Wang L."/>
            <person name="Guo Z."/>
            <person name="Han Y."/>
            <person name="Zhang J."/>
            <person name="Pei D."/>
            <person name="Zhou D."/>
            <person name="Qin H."/>
            <person name="Pang X."/>
            <person name="Han Y."/>
            <person name="Zhai J."/>
            <person name="Li M."/>
            <person name="Cui B."/>
            <person name="Qi Z."/>
            <person name="Jin L."/>
            <person name="Dai R."/>
            <person name="Chen F."/>
            <person name="Li S."/>
            <person name="Ye C."/>
            <person name="Du Z."/>
            <person name="Lin W."/>
            <person name="Wang J."/>
            <person name="Yu J."/>
            <person name="Yang H."/>
            <person name="Wang J."/>
            <person name="Huang P."/>
            <person name="Yang R."/>
        </authorList>
    </citation>
    <scope>NUCLEOTIDE SEQUENCE [LARGE SCALE GENOMIC DNA]</scope>
    <source>
        <strain>91001 / Biovar Mediaevalis</strain>
    </source>
</reference>
<name>DNLJ_YERPE</name>
<gene>
    <name evidence="1" type="primary">ligA</name>
    <name type="ordered locus">YPO2989</name>
    <name type="ordered locus">y1492</name>
    <name type="ordered locus">YP_2614</name>
</gene>
<feature type="chain" id="PRO_0000313523" description="DNA ligase">
    <location>
        <begin position="1"/>
        <end position="670"/>
    </location>
</feature>
<feature type="domain" description="BRCT" evidence="1">
    <location>
        <begin position="592"/>
        <end position="670"/>
    </location>
</feature>
<feature type="active site" description="N6-AMP-lysine intermediate" evidence="1">
    <location>
        <position position="115"/>
    </location>
</feature>
<feature type="binding site" evidence="1">
    <location>
        <begin position="32"/>
        <end position="36"/>
    </location>
    <ligand>
        <name>NAD(+)</name>
        <dbReference type="ChEBI" id="CHEBI:57540"/>
    </ligand>
</feature>
<feature type="binding site" evidence="1">
    <location>
        <begin position="81"/>
        <end position="82"/>
    </location>
    <ligand>
        <name>NAD(+)</name>
        <dbReference type="ChEBI" id="CHEBI:57540"/>
    </ligand>
</feature>
<feature type="binding site" evidence="1">
    <location>
        <position position="113"/>
    </location>
    <ligand>
        <name>NAD(+)</name>
        <dbReference type="ChEBI" id="CHEBI:57540"/>
    </ligand>
</feature>
<feature type="binding site" evidence="1">
    <location>
        <position position="136"/>
    </location>
    <ligand>
        <name>NAD(+)</name>
        <dbReference type="ChEBI" id="CHEBI:57540"/>
    </ligand>
</feature>
<feature type="binding site" evidence="1">
    <location>
        <position position="173"/>
    </location>
    <ligand>
        <name>NAD(+)</name>
        <dbReference type="ChEBI" id="CHEBI:57540"/>
    </ligand>
</feature>
<feature type="binding site" evidence="1">
    <location>
        <position position="290"/>
    </location>
    <ligand>
        <name>NAD(+)</name>
        <dbReference type="ChEBI" id="CHEBI:57540"/>
    </ligand>
</feature>
<feature type="binding site" evidence="1">
    <location>
        <position position="314"/>
    </location>
    <ligand>
        <name>NAD(+)</name>
        <dbReference type="ChEBI" id="CHEBI:57540"/>
    </ligand>
</feature>
<feature type="binding site" evidence="1">
    <location>
        <position position="408"/>
    </location>
    <ligand>
        <name>Zn(2+)</name>
        <dbReference type="ChEBI" id="CHEBI:29105"/>
    </ligand>
</feature>
<feature type="binding site" evidence="1">
    <location>
        <position position="411"/>
    </location>
    <ligand>
        <name>Zn(2+)</name>
        <dbReference type="ChEBI" id="CHEBI:29105"/>
    </ligand>
</feature>
<feature type="binding site" evidence="1">
    <location>
        <position position="426"/>
    </location>
    <ligand>
        <name>Zn(2+)</name>
        <dbReference type="ChEBI" id="CHEBI:29105"/>
    </ligand>
</feature>
<feature type="binding site" evidence="1">
    <location>
        <position position="432"/>
    </location>
    <ligand>
        <name>Zn(2+)</name>
        <dbReference type="ChEBI" id="CHEBI:29105"/>
    </ligand>
</feature>
<comment type="function">
    <text evidence="1">DNA ligase that catalyzes the formation of phosphodiester linkages between 5'-phosphoryl and 3'-hydroxyl groups in double-stranded DNA using NAD as a coenzyme and as the energy source for the reaction. It is essential for DNA replication and repair of damaged DNA.</text>
</comment>
<comment type="catalytic activity">
    <reaction evidence="1">
        <text>NAD(+) + (deoxyribonucleotide)n-3'-hydroxyl + 5'-phospho-(deoxyribonucleotide)m = (deoxyribonucleotide)n+m + AMP + beta-nicotinamide D-nucleotide.</text>
        <dbReference type="EC" id="6.5.1.2"/>
    </reaction>
</comment>
<comment type="cofactor">
    <cofactor evidence="1">
        <name>Mg(2+)</name>
        <dbReference type="ChEBI" id="CHEBI:18420"/>
    </cofactor>
    <cofactor evidence="1">
        <name>Mn(2+)</name>
        <dbReference type="ChEBI" id="CHEBI:29035"/>
    </cofactor>
</comment>
<comment type="similarity">
    <text evidence="1">Belongs to the NAD-dependent DNA ligase family. LigA subfamily.</text>
</comment>
<dbReference type="EC" id="6.5.1.2" evidence="1"/>
<dbReference type="EMBL" id="AE009952">
    <property type="protein sequence ID" value="AAM85063.1"/>
    <property type="molecule type" value="Genomic_DNA"/>
</dbReference>
<dbReference type="EMBL" id="AE017042">
    <property type="protein sequence ID" value="AAS62807.1"/>
    <property type="molecule type" value="Genomic_DNA"/>
</dbReference>
<dbReference type="EMBL" id="AL590842">
    <property type="protein sequence ID" value="CAL21593.1"/>
    <property type="molecule type" value="Genomic_DNA"/>
</dbReference>
<dbReference type="PIR" id="AF0363">
    <property type="entry name" value="AF0363"/>
</dbReference>
<dbReference type="RefSeq" id="WP_002213368.1">
    <property type="nucleotide sequence ID" value="NZ_WUCM01000111.1"/>
</dbReference>
<dbReference type="RefSeq" id="YP_002347913.1">
    <property type="nucleotide sequence ID" value="NC_003143.1"/>
</dbReference>
<dbReference type="SMR" id="Q7CJF3"/>
<dbReference type="IntAct" id="Q7CJF3">
    <property type="interactions" value="5"/>
</dbReference>
<dbReference type="STRING" id="214092.YPO2989"/>
<dbReference type="PaxDb" id="214092-YPO2989"/>
<dbReference type="EnsemblBacteria" id="AAS62807">
    <property type="protein sequence ID" value="AAS62807"/>
    <property type="gene ID" value="YP_2614"/>
</dbReference>
<dbReference type="GeneID" id="57975709"/>
<dbReference type="KEGG" id="ype:YPO2989"/>
<dbReference type="KEGG" id="ypk:y1492"/>
<dbReference type="KEGG" id="ypm:YP_2614"/>
<dbReference type="PATRIC" id="fig|214092.21.peg.3443"/>
<dbReference type="eggNOG" id="COG0272">
    <property type="taxonomic scope" value="Bacteria"/>
</dbReference>
<dbReference type="HOGENOM" id="CLU_007764_2_1_6"/>
<dbReference type="OMA" id="HDVEHEI"/>
<dbReference type="OrthoDB" id="9759736at2"/>
<dbReference type="Proteomes" id="UP000000815">
    <property type="component" value="Chromosome"/>
</dbReference>
<dbReference type="Proteomes" id="UP000001019">
    <property type="component" value="Chromosome"/>
</dbReference>
<dbReference type="Proteomes" id="UP000002490">
    <property type="component" value="Chromosome"/>
</dbReference>
<dbReference type="GO" id="GO:0005829">
    <property type="term" value="C:cytosol"/>
    <property type="evidence" value="ECO:0000318"/>
    <property type="project" value="GO_Central"/>
</dbReference>
<dbReference type="GO" id="GO:0003677">
    <property type="term" value="F:DNA binding"/>
    <property type="evidence" value="ECO:0007669"/>
    <property type="project" value="InterPro"/>
</dbReference>
<dbReference type="GO" id="GO:0003911">
    <property type="term" value="F:DNA ligase (NAD+) activity"/>
    <property type="evidence" value="ECO:0000318"/>
    <property type="project" value="GO_Central"/>
</dbReference>
<dbReference type="GO" id="GO:0046872">
    <property type="term" value="F:metal ion binding"/>
    <property type="evidence" value="ECO:0007669"/>
    <property type="project" value="UniProtKB-KW"/>
</dbReference>
<dbReference type="GO" id="GO:0006281">
    <property type="term" value="P:DNA repair"/>
    <property type="evidence" value="ECO:0007669"/>
    <property type="project" value="UniProtKB-KW"/>
</dbReference>
<dbReference type="GO" id="GO:0006260">
    <property type="term" value="P:DNA replication"/>
    <property type="evidence" value="ECO:0007669"/>
    <property type="project" value="UniProtKB-KW"/>
</dbReference>
<dbReference type="CDD" id="cd17748">
    <property type="entry name" value="BRCT_DNA_ligase_like"/>
    <property type="match status" value="1"/>
</dbReference>
<dbReference type="CDD" id="cd00114">
    <property type="entry name" value="LIGANc"/>
    <property type="match status" value="1"/>
</dbReference>
<dbReference type="FunFam" id="1.10.150.20:FF:000006">
    <property type="entry name" value="DNA ligase"/>
    <property type="match status" value="1"/>
</dbReference>
<dbReference type="FunFam" id="1.10.150.20:FF:000007">
    <property type="entry name" value="DNA ligase"/>
    <property type="match status" value="1"/>
</dbReference>
<dbReference type="FunFam" id="1.10.287.610:FF:000002">
    <property type="entry name" value="DNA ligase"/>
    <property type="match status" value="1"/>
</dbReference>
<dbReference type="FunFam" id="2.40.50.140:FF:000012">
    <property type="entry name" value="DNA ligase"/>
    <property type="match status" value="1"/>
</dbReference>
<dbReference type="FunFam" id="3.30.470.30:FF:000001">
    <property type="entry name" value="DNA ligase"/>
    <property type="match status" value="1"/>
</dbReference>
<dbReference type="FunFam" id="3.40.50.10190:FF:000004">
    <property type="entry name" value="DNA ligase"/>
    <property type="match status" value="1"/>
</dbReference>
<dbReference type="FunFam" id="6.20.10.30:FF:000001">
    <property type="entry name" value="DNA ligase"/>
    <property type="match status" value="1"/>
</dbReference>
<dbReference type="Gene3D" id="6.20.10.30">
    <property type="match status" value="1"/>
</dbReference>
<dbReference type="Gene3D" id="1.10.150.20">
    <property type="entry name" value="5' to 3' exonuclease, C-terminal subdomain"/>
    <property type="match status" value="2"/>
</dbReference>
<dbReference type="Gene3D" id="3.40.50.10190">
    <property type="entry name" value="BRCT domain"/>
    <property type="match status" value="1"/>
</dbReference>
<dbReference type="Gene3D" id="3.30.470.30">
    <property type="entry name" value="DNA ligase/mRNA capping enzyme"/>
    <property type="match status" value="1"/>
</dbReference>
<dbReference type="Gene3D" id="1.10.287.610">
    <property type="entry name" value="Helix hairpin bin"/>
    <property type="match status" value="1"/>
</dbReference>
<dbReference type="Gene3D" id="2.40.50.140">
    <property type="entry name" value="Nucleic acid-binding proteins"/>
    <property type="match status" value="1"/>
</dbReference>
<dbReference type="HAMAP" id="MF_01588">
    <property type="entry name" value="DNA_ligase_A"/>
    <property type="match status" value="1"/>
</dbReference>
<dbReference type="InterPro" id="IPR001357">
    <property type="entry name" value="BRCT_dom"/>
</dbReference>
<dbReference type="InterPro" id="IPR036420">
    <property type="entry name" value="BRCT_dom_sf"/>
</dbReference>
<dbReference type="InterPro" id="IPR041663">
    <property type="entry name" value="DisA/LigA_HHH"/>
</dbReference>
<dbReference type="InterPro" id="IPR001679">
    <property type="entry name" value="DNA_ligase"/>
</dbReference>
<dbReference type="InterPro" id="IPR018239">
    <property type="entry name" value="DNA_ligase_AS"/>
</dbReference>
<dbReference type="InterPro" id="IPR033136">
    <property type="entry name" value="DNA_ligase_CS"/>
</dbReference>
<dbReference type="InterPro" id="IPR013839">
    <property type="entry name" value="DNAligase_adenylation"/>
</dbReference>
<dbReference type="InterPro" id="IPR013840">
    <property type="entry name" value="DNAligase_N"/>
</dbReference>
<dbReference type="InterPro" id="IPR003583">
    <property type="entry name" value="Hlx-hairpin-Hlx_DNA-bd_motif"/>
</dbReference>
<dbReference type="InterPro" id="IPR012340">
    <property type="entry name" value="NA-bd_OB-fold"/>
</dbReference>
<dbReference type="InterPro" id="IPR004150">
    <property type="entry name" value="NAD_DNA_ligase_OB"/>
</dbReference>
<dbReference type="InterPro" id="IPR010994">
    <property type="entry name" value="RuvA_2-like"/>
</dbReference>
<dbReference type="InterPro" id="IPR004149">
    <property type="entry name" value="Znf_DNAligase_C4"/>
</dbReference>
<dbReference type="NCBIfam" id="TIGR00575">
    <property type="entry name" value="dnlj"/>
    <property type="match status" value="1"/>
</dbReference>
<dbReference type="NCBIfam" id="NF005932">
    <property type="entry name" value="PRK07956.1"/>
    <property type="match status" value="1"/>
</dbReference>
<dbReference type="PANTHER" id="PTHR23389">
    <property type="entry name" value="CHROMOSOME TRANSMISSION FIDELITY FACTOR 18"/>
    <property type="match status" value="1"/>
</dbReference>
<dbReference type="PANTHER" id="PTHR23389:SF9">
    <property type="entry name" value="DNA LIGASE"/>
    <property type="match status" value="1"/>
</dbReference>
<dbReference type="Pfam" id="PF00533">
    <property type="entry name" value="BRCT"/>
    <property type="match status" value="1"/>
</dbReference>
<dbReference type="Pfam" id="PF01653">
    <property type="entry name" value="DNA_ligase_aden"/>
    <property type="match status" value="1"/>
</dbReference>
<dbReference type="Pfam" id="PF03120">
    <property type="entry name" value="DNA_ligase_OB"/>
    <property type="match status" value="1"/>
</dbReference>
<dbReference type="Pfam" id="PF03119">
    <property type="entry name" value="DNA_ligase_ZBD"/>
    <property type="match status" value="1"/>
</dbReference>
<dbReference type="Pfam" id="PF12826">
    <property type="entry name" value="HHH_2"/>
    <property type="match status" value="1"/>
</dbReference>
<dbReference type="Pfam" id="PF14520">
    <property type="entry name" value="HHH_5"/>
    <property type="match status" value="1"/>
</dbReference>
<dbReference type="Pfam" id="PF22745">
    <property type="entry name" value="Nlig-Ia"/>
    <property type="match status" value="1"/>
</dbReference>
<dbReference type="PIRSF" id="PIRSF001604">
    <property type="entry name" value="LigA"/>
    <property type="match status" value="1"/>
</dbReference>
<dbReference type="SMART" id="SM00292">
    <property type="entry name" value="BRCT"/>
    <property type="match status" value="1"/>
</dbReference>
<dbReference type="SMART" id="SM00278">
    <property type="entry name" value="HhH1"/>
    <property type="match status" value="4"/>
</dbReference>
<dbReference type="SMART" id="SM00532">
    <property type="entry name" value="LIGANc"/>
    <property type="match status" value="1"/>
</dbReference>
<dbReference type="SUPFAM" id="SSF52113">
    <property type="entry name" value="BRCT domain"/>
    <property type="match status" value="1"/>
</dbReference>
<dbReference type="SUPFAM" id="SSF56091">
    <property type="entry name" value="DNA ligase/mRNA capping enzyme, catalytic domain"/>
    <property type="match status" value="1"/>
</dbReference>
<dbReference type="SUPFAM" id="SSF50249">
    <property type="entry name" value="Nucleic acid-binding proteins"/>
    <property type="match status" value="1"/>
</dbReference>
<dbReference type="SUPFAM" id="SSF47781">
    <property type="entry name" value="RuvA domain 2-like"/>
    <property type="match status" value="1"/>
</dbReference>
<dbReference type="PROSITE" id="PS50172">
    <property type="entry name" value="BRCT"/>
    <property type="match status" value="1"/>
</dbReference>
<dbReference type="PROSITE" id="PS01055">
    <property type="entry name" value="DNA_LIGASE_N1"/>
    <property type="match status" value="1"/>
</dbReference>
<dbReference type="PROSITE" id="PS01056">
    <property type="entry name" value="DNA_LIGASE_N2"/>
    <property type="match status" value="1"/>
</dbReference>
<accession>Q7CJF3</accession>
<accession>Q74SI9</accession>
<evidence type="ECO:0000255" key="1">
    <source>
        <dbReference type="HAMAP-Rule" id="MF_01588"/>
    </source>
</evidence>
<keyword id="KW-0227">DNA damage</keyword>
<keyword id="KW-0234">DNA repair</keyword>
<keyword id="KW-0235">DNA replication</keyword>
<keyword id="KW-0436">Ligase</keyword>
<keyword id="KW-0460">Magnesium</keyword>
<keyword id="KW-0464">Manganese</keyword>
<keyword id="KW-0479">Metal-binding</keyword>
<keyword id="KW-0520">NAD</keyword>
<keyword id="KW-1185">Reference proteome</keyword>
<keyword id="KW-0862">Zinc</keyword>